<gene>
    <name type="primary">MED6</name>
</gene>
<dbReference type="EMBL" id="BC102648">
    <property type="protein sequence ID" value="AAI02649.1"/>
    <property type="molecule type" value="mRNA"/>
</dbReference>
<dbReference type="RefSeq" id="NP_001029409.1">
    <property type="nucleotide sequence ID" value="NM_001034237.2"/>
</dbReference>
<dbReference type="SMR" id="Q3SZY9"/>
<dbReference type="FunCoup" id="Q3SZY9">
    <property type="interactions" value="4268"/>
</dbReference>
<dbReference type="STRING" id="9913.ENSBTAP00000071972"/>
<dbReference type="PaxDb" id="9913-ENSBTAP00000008922"/>
<dbReference type="GeneID" id="505293"/>
<dbReference type="KEGG" id="bta:505293"/>
<dbReference type="CTD" id="10001"/>
<dbReference type="VEuPathDB" id="HostDB:ENSBTAG00000006786"/>
<dbReference type="eggNOG" id="KOG3169">
    <property type="taxonomic scope" value="Eukaryota"/>
</dbReference>
<dbReference type="HOGENOM" id="CLU_077754_1_0_1"/>
<dbReference type="InParanoid" id="Q3SZY9"/>
<dbReference type="OMA" id="KKDMKPP"/>
<dbReference type="OrthoDB" id="344220at2759"/>
<dbReference type="TreeFam" id="TF313577"/>
<dbReference type="Reactome" id="R-BTA-212436">
    <property type="pathway name" value="Generic Transcription Pathway"/>
</dbReference>
<dbReference type="Reactome" id="R-BTA-9841922">
    <property type="pathway name" value="MLL4 and MLL3 complexes regulate expression of PPARG target genes in adipogenesis and hepatic steatosis"/>
</dbReference>
<dbReference type="Proteomes" id="UP000009136">
    <property type="component" value="Chromosome 10"/>
</dbReference>
<dbReference type="Bgee" id="ENSBTAG00000006786">
    <property type="expression patterns" value="Expressed in oocyte and 105 other cell types or tissues"/>
</dbReference>
<dbReference type="GO" id="GO:0070847">
    <property type="term" value="C:core mediator complex"/>
    <property type="evidence" value="ECO:0000318"/>
    <property type="project" value="GO_Central"/>
</dbReference>
<dbReference type="GO" id="GO:0016592">
    <property type="term" value="C:mediator complex"/>
    <property type="evidence" value="ECO:0000318"/>
    <property type="project" value="GO_Central"/>
</dbReference>
<dbReference type="GO" id="GO:0003713">
    <property type="term" value="F:transcription coactivator activity"/>
    <property type="evidence" value="ECO:0000318"/>
    <property type="project" value="GO_Central"/>
</dbReference>
<dbReference type="GO" id="GO:0006357">
    <property type="term" value="P:regulation of transcription by RNA polymerase II"/>
    <property type="evidence" value="ECO:0000318"/>
    <property type="project" value="GO_Central"/>
</dbReference>
<dbReference type="FunFam" id="3.10.450.580:FF:000001">
    <property type="entry name" value="Mediator of RNA polymerase II transcription subunit 6"/>
    <property type="match status" value="1"/>
</dbReference>
<dbReference type="Gene3D" id="3.10.450.580">
    <property type="entry name" value="Mediator complex, subunit Med6"/>
    <property type="match status" value="1"/>
</dbReference>
<dbReference type="InterPro" id="IPR007018">
    <property type="entry name" value="Mediator_Med6"/>
</dbReference>
<dbReference type="InterPro" id="IPR016820">
    <property type="entry name" value="Mediator_Med6_met/pln"/>
</dbReference>
<dbReference type="InterPro" id="IPR038566">
    <property type="entry name" value="Mediator_Med6_sf"/>
</dbReference>
<dbReference type="PANTHER" id="PTHR13104">
    <property type="entry name" value="MED-6-RELATED"/>
    <property type="match status" value="1"/>
</dbReference>
<dbReference type="Pfam" id="PF04934">
    <property type="entry name" value="Med6"/>
    <property type="match status" value="1"/>
</dbReference>
<dbReference type="PIRSF" id="PIRSF023869">
    <property type="entry name" value="Mediator_MED6_meta/pln"/>
    <property type="match status" value="1"/>
</dbReference>
<feature type="chain" id="PRO_0000283797" description="Mediator of RNA polymerase II transcription subunit 6">
    <location>
        <begin position="1"/>
        <end position="246"/>
    </location>
</feature>
<feature type="region of interest" description="Disordered" evidence="3">
    <location>
        <begin position="191"/>
        <end position="246"/>
    </location>
</feature>
<feature type="compositionally biased region" description="Basic and acidic residues" evidence="3">
    <location>
        <begin position="206"/>
        <end position="226"/>
    </location>
</feature>
<feature type="modified residue" description="N6-acetyllysine" evidence="2">
    <location>
        <position position="236"/>
    </location>
</feature>
<feature type="modified residue" description="N6-acetyllysine" evidence="2">
    <location>
        <position position="241"/>
    </location>
</feature>
<feature type="cross-link" description="Glycyl lysine isopeptide (Lys-Gly) (interchain with G-Cter in SUMO2)" evidence="2">
    <location>
        <position position="208"/>
    </location>
</feature>
<accession>Q3SZY9</accession>
<name>MED6_BOVIN</name>
<evidence type="ECO:0000250" key="1"/>
<evidence type="ECO:0000250" key="2">
    <source>
        <dbReference type="UniProtKB" id="O75586"/>
    </source>
</evidence>
<evidence type="ECO:0000256" key="3">
    <source>
        <dbReference type="SAM" id="MobiDB-lite"/>
    </source>
</evidence>
<evidence type="ECO:0000305" key="4"/>
<protein>
    <recommendedName>
        <fullName>Mediator of RNA polymerase II transcription subunit 6</fullName>
    </recommendedName>
    <alternativeName>
        <fullName>Mediator complex subunit 6</fullName>
    </alternativeName>
</protein>
<proteinExistence type="evidence at transcript level"/>
<sequence length="246" mass="28406">MAAVDIRDNLLGISWVDSSWIPILNSGSVLDYFSERSNPFYDRTCNNEVVKMQRLTLEHLNQMVGVEYILLHAQEPILFIIRKQQRQSPTQVIPLADYYIIAGVIYQAPDLGSVINSRVLTAVHGIQSAFDEAMSYCRYHPSKGYWWHFKDHEEQDKVKPKVKRKEEPSSIFQRQRVDALLLDLRQKFPPKFVQQKSGEKPVPVDQTKKEAEPLPETVKSEEKETAKNVQQTVGTKGPPEKRMRLQ</sequence>
<reference key="1">
    <citation type="submission" date="2005-08" db="EMBL/GenBank/DDBJ databases">
        <authorList>
            <consortium name="NIH - Mammalian Gene Collection (MGC) project"/>
        </authorList>
    </citation>
    <scope>NUCLEOTIDE SEQUENCE [LARGE SCALE MRNA]</scope>
    <source>
        <strain>Crossbred X Angus</strain>
        <tissue>Ileum</tissue>
    </source>
</reference>
<keyword id="KW-0007">Acetylation</keyword>
<keyword id="KW-0010">Activator</keyword>
<keyword id="KW-1017">Isopeptide bond</keyword>
<keyword id="KW-0539">Nucleus</keyword>
<keyword id="KW-1185">Reference proteome</keyword>
<keyword id="KW-0804">Transcription</keyword>
<keyword id="KW-0805">Transcription regulation</keyword>
<keyword id="KW-0832">Ubl conjugation</keyword>
<comment type="function">
    <text evidence="1">Component of the Mediator complex, a coactivator involved in the regulated transcription of nearly all RNA polymerase II-dependent genes. Mediator functions as a bridge to convey information from gene-specific regulatory proteins to the basal RNA polymerase II transcription machinery. Mediator is recruited to promoters by direct interactions with regulatory proteins and serves as a scaffold for the assembly of a functional preinitiation complex with RNA polymerase II and the general transcription factors (By similarity).</text>
</comment>
<comment type="subunit">
    <text evidence="1">Component of the Mediator complex, which is composed of MED1, MED4, MED6, MED7, MED8, MED9, MED10, MED11, MED12, MED13, MED13L, MED14, MED15, MED16, MED17, MED18, MED19, MED20, MED21, MED22, MED23, MED24, MED25, MED26, MED27, MED29, MED30, MED31, CCNC, CDK8 and CDC2L6/CDK11. The MED12, MED13, CCNC and CDK8 subunits form a distinct module termed the CDK8 module. Mediator containing the CDK8 module is less active than Mediator lacking this module in supporting transcriptional activation. Individual preparations of the Mediator complex lacking one or more distinct subunits have been variously termed ARC, CRSP, DRIP, PC2, SMCC and TRAP. Interacts with CTNNB1 and GLI3 (By similarity).</text>
</comment>
<comment type="subcellular location">
    <subcellularLocation>
        <location evidence="1">Nucleus</location>
    </subcellularLocation>
</comment>
<comment type="similarity">
    <text evidence="4">Belongs to the Mediator complex subunit 6 family.</text>
</comment>
<organism>
    <name type="scientific">Bos taurus</name>
    <name type="common">Bovine</name>
    <dbReference type="NCBI Taxonomy" id="9913"/>
    <lineage>
        <taxon>Eukaryota</taxon>
        <taxon>Metazoa</taxon>
        <taxon>Chordata</taxon>
        <taxon>Craniata</taxon>
        <taxon>Vertebrata</taxon>
        <taxon>Euteleostomi</taxon>
        <taxon>Mammalia</taxon>
        <taxon>Eutheria</taxon>
        <taxon>Laurasiatheria</taxon>
        <taxon>Artiodactyla</taxon>
        <taxon>Ruminantia</taxon>
        <taxon>Pecora</taxon>
        <taxon>Bovidae</taxon>
        <taxon>Bovinae</taxon>
        <taxon>Bos</taxon>
    </lineage>
</organism>